<reference key="1">
    <citation type="submission" date="1994-04" db="EMBL/GenBank/DDBJ databases">
        <title>Sequencing and characterization of CDC91.</title>
        <authorList>
            <person name="Bi E."/>
            <person name="Pringle J.R."/>
        </authorList>
    </citation>
    <scope>NUCLEOTIDE SEQUENCE [GENOMIC DNA]</scope>
</reference>
<reference key="2">
    <citation type="journal article" date="2003" name="Mol. Biol. Cell">
        <title>Human PIG-U and yeast Cdc91p are the fifth subunit of GPI transamidase that attaches GPI-anchors to proteins.</title>
        <authorList>
            <person name="Hong Y."/>
            <person name="Ohishi K."/>
            <person name="Kang J.Y."/>
            <person name="Tanaka S."/>
            <person name="Inoue N."/>
            <person name="Nishimura J."/>
            <person name="Maeda Y."/>
            <person name="Kinoshita T."/>
        </authorList>
    </citation>
    <scope>NUCLEOTIDE SEQUENCE [GENOMIC DNA]</scope>
    <scope>FUNCTION</scope>
    <scope>SUBUNIT</scope>
</reference>
<reference key="3">
    <citation type="journal article" date="1997" name="Nature">
        <title>The nucleotide sequence of Saccharomyces cerevisiae chromosome XII.</title>
        <authorList>
            <person name="Johnston M."/>
            <person name="Hillier L.W."/>
            <person name="Riles L."/>
            <person name="Albermann K."/>
            <person name="Andre B."/>
            <person name="Ansorge W."/>
            <person name="Benes V."/>
            <person name="Brueckner M."/>
            <person name="Delius H."/>
            <person name="Dubois E."/>
            <person name="Duesterhoeft A."/>
            <person name="Entian K.-D."/>
            <person name="Floeth M."/>
            <person name="Goffeau A."/>
            <person name="Hebling U."/>
            <person name="Heumann K."/>
            <person name="Heuss-Neitzel D."/>
            <person name="Hilbert H."/>
            <person name="Hilger F."/>
            <person name="Kleine K."/>
            <person name="Koetter P."/>
            <person name="Louis E.J."/>
            <person name="Messenguy F."/>
            <person name="Mewes H.-W."/>
            <person name="Miosga T."/>
            <person name="Moestl D."/>
            <person name="Mueller-Auer S."/>
            <person name="Nentwich U."/>
            <person name="Obermaier B."/>
            <person name="Piravandi E."/>
            <person name="Pohl T.M."/>
            <person name="Portetelle D."/>
            <person name="Purnelle B."/>
            <person name="Rechmann S."/>
            <person name="Rieger M."/>
            <person name="Rinke M."/>
            <person name="Rose M."/>
            <person name="Scharfe M."/>
            <person name="Scherens B."/>
            <person name="Scholler P."/>
            <person name="Schwager C."/>
            <person name="Schwarz S."/>
            <person name="Underwood A.P."/>
            <person name="Urrestarazu L.A."/>
            <person name="Vandenbol M."/>
            <person name="Verhasselt P."/>
            <person name="Vierendeels F."/>
            <person name="Voet M."/>
            <person name="Volckaert G."/>
            <person name="Voss H."/>
            <person name="Wambutt R."/>
            <person name="Wedler E."/>
            <person name="Wedler H."/>
            <person name="Zimmermann F.K."/>
            <person name="Zollner A."/>
            <person name="Hani J."/>
            <person name="Hoheisel J.D."/>
        </authorList>
    </citation>
    <scope>NUCLEOTIDE SEQUENCE [LARGE SCALE GENOMIC DNA]</scope>
    <source>
        <strain>ATCC 204508 / S288c</strain>
    </source>
</reference>
<reference key="4">
    <citation type="journal article" date="2014" name="G3 (Bethesda)">
        <title>The reference genome sequence of Saccharomyces cerevisiae: Then and now.</title>
        <authorList>
            <person name="Engel S.R."/>
            <person name="Dietrich F.S."/>
            <person name="Fisk D.G."/>
            <person name="Binkley G."/>
            <person name="Balakrishnan R."/>
            <person name="Costanzo M.C."/>
            <person name="Dwight S.S."/>
            <person name="Hitz B.C."/>
            <person name="Karra K."/>
            <person name="Nash R.S."/>
            <person name="Weng S."/>
            <person name="Wong E.D."/>
            <person name="Lloyd P."/>
            <person name="Skrzypek M.S."/>
            <person name="Miyasato S.R."/>
            <person name="Simison M."/>
            <person name="Cherry J.M."/>
        </authorList>
    </citation>
    <scope>GENOME REANNOTATION</scope>
    <source>
        <strain>ATCC 204508 / S288c</strain>
    </source>
</reference>
<reference key="5">
    <citation type="journal article" date="2006" name="Proc. Natl. Acad. Sci. U.S.A.">
        <title>A global topology map of the Saccharomyces cerevisiae membrane proteome.</title>
        <authorList>
            <person name="Kim H."/>
            <person name="Melen K."/>
            <person name="Oesterberg M."/>
            <person name="von Heijne G."/>
        </authorList>
    </citation>
    <scope>TOPOLOGY [LARGE SCALE ANALYSIS]</scope>
    <source>
        <strain>ATCC 208353 / W303-1A</strain>
    </source>
</reference>
<sequence length="394" mass="44741">MDSTALKVALGCIAIRLAVNSLFPSLQQQLDQSVEFSTPVTSFRSLQEGIYLLRNNIQVYNHGVVHHPPILIFFLSLFNSDRLISLIYALIDGLIAYQLTEVTKAFKNLKLKVWLPGLLYAVNPLTLLSCISRSSIIFTNFAISSSLYCILAEGNVLLSSVMISISGYLSVYPILLLIPLLGMLKSWRQRILSAIVSILSLLILLLFSYSILGSQSWSFLTQVYGSIITFEKVFPNLGLWWYFFIEMFDTFIPFFKAVFNIFIAVFITPFTLRYHKQPFYAFILCIGWIVLTKPYPSLGDAGFFFSFLPFFTPLFGYLRYPIISALLFLHAIVLAPIFYHLWVVLGSGNSNFFYAISLVYALAIASILVDLNWAMLRIEYDNGIPNFKLKVTQI</sequence>
<feature type="chain" id="PRO_0000121398" description="GPI transamidase component GAB1">
    <location>
        <begin position="1"/>
        <end position="394"/>
    </location>
</feature>
<feature type="topological domain" description="Cytoplasmic" evidence="2">
    <location>
        <begin position="1"/>
        <end position="135"/>
    </location>
</feature>
<feature type="transmembrane region" description="Helical" evidence="2">
    <location>
        <begin position="136"/>
        <end position="156"/>
    </location>
</feature>
<feature type="topological domain" description="Lumenal" evidence="2">
    <location>
        <begin position="157"/>
        <end position="160"/>
    </location>
</feature>
<feature type="transmembrane region" description="Helical" evidence="2">
    <location>
        <begin position="161"/>
        <end position="181"/>
    </location>
</feature>
<feature type="topological domain" description="Cytoplasmic" evidence="2">
    <location>
        <begin position="182"/>
        <end position="190"/>
    </location>
</feature>
<feature type="transmembrane region" description="Helical" evidence="2">
    <location>
        <begin position="191"/>
        <end position="211"/>
    </location>
</feature>
<feature type="topological domain" description="Lumenal" evidence="2">
    <location>
        <begin position="212"/>
        <end position="224"/>
    </location>
</feature>
<feature type="transmembrane region" description="Helical" evidence="2">
    <location>
        <begin position="225"/>
        <end position="245"/>
    </location>
</feature>
<feature type="topological domain" description="Cytoplasmic" evidence="2">
    <location>
        <begin position="246"/>
        <end position="250"/>
    </location>
</feature>
<feature type="transmembrane region" description="Helical" evidence="2">
    <location>
        <begin position="251"/>
        <end position="271"/>
    </location>
</feature>
<feature type="topological domain" description="Lumenal" evidence="2">
    <location>
        <begin position="272"/>
        <end position="297"/>
    </location>
</feature>
<feature type="transmembrane region" description="Helical" evidence="2">
    <location>
        <begin position="298"/>
        <end position="318"/>
    </location>
</feature>
<feature type="topological domain" description="Cytoplasmic" evidence="2">
    <location>
        <begin position="319"/>
        <end position="324"/>
    </location>
</feature>
<feature type="transmembrane region" description="Helical" evidence="2">
    <location>
        <begin position="325"/>
        <end position="345"/>
    </location>
</feature>
<feature type="topological domain" description="Lumenal" evidence="2">
    <location>
        <begin position="346"/>
        <end position="351"/>
    </location>
</feature>
<feature type="transmembrane region" description="Helical" evidence="2">
    <location>
        <begin position="352"/>
        <end position="372"/>
    </location>
</feature>
<feature type="topological domain" description="Cytoplasmic" evidence="2">
    <location>
        <begin position="373"/>
        <end position="394"/>
    </location>
</feature>
<feature type="region of interest" description="May be involved in recognition of long-chain fatty acids in GPI" evidence="1">
    <location>
        <begin position="235"/>
        <end position="255"/>
    </location>
</feature>
<protein>
    <recommendedName>
        <fullName>GPI transamidase component GAB1</fullName>
    </recommendedName>
    <alternativeName>
        <fullName>Cell division control protein 91</fullName>
    </alternativeName>
</protein>
<accession>P41733</accession>
<accession>D6VZ92</accession>
<comment type="function">
    <text evidence="3">Component of the GPI transamidase complex. May be involved in the recognition of either the GPI attachment signal or the lipid portion of GPI.</text>
</comment>
<comment type="pathway">
    <text>Glycolipid biosynthesis; glycosylphosphatidylinositol-anchor biosynthesis.</text>
</comment>
<comment type="subunit">
    <text evidence="3">Forms a complex with GPI16, GPI17, GPI8 and GAA1.</text>
</comment>
<comment type="subcellular location">
    <subcellularLocation>
        <location evidence="4">Endoplasmic reticulum membrane</location>
        <topology evidence="4">Multi-pass membrane protein</topology>
    </subcellularLocation>
</comment>
<comment type="similarity">
    <text evidence="4">Belongs to the PIGU family.</text>
</comment>
<keyword id="KW-0131">Cell cycle</keyword>
<keyword id="KW-0132">Cell division</keyword>
<keyword id="KW-0256">Endoplasmic reticulum</keyword>
<keyword id="KW-0337">GPI-anchor biosynthesis</keyword>
<keyword id="KW-0472">Membrane</keyword>
<keyword id="KW-1185">Reference proteome</keyword>
<keyword id="KW-0812">Transmembrane</keyword>
<keyword id="KW-1133">Transmembrane helix</keyword>
<organism>
    <name type="scientific">Saccharomyces cerevisiae (strain ATCC 204508 / S288c)</name>
    <name type="common">Baker's yeast</name>
    <dbReference type="NCBI Taxonomy" id="559292"/>
    <lineage>
        <taxon>Eukaryota</taxon>
        <taxon>Fungi</taxon>
        <taxon>Dikarya</taxon>
        <taxon>Ascomycota</taxon>
        <taxon>Saccharomycotina</taxon>
        <taxon>Saccharomycetes</taxon>
        <taxon>Saccharomycetales</taxon>
        <taxon>Saccharomycetaceae</taxon>
        <taxon>Saccharomyces</taxon>
    </lineage>
</organism>
<gene>
    <name type="primary">GAB1</name>
    <name type="synonym">CDC91</name>
    <name type="ordered locus">YLR459W</name>
    <name type="ORF">L9122.2</name>
</gene>
<proteinExistence type="evidence at protein level"/>
<evidence type="ECO:0000250" key="1"/>
<evidence type="ECO:0000255" key="2"/>
<evidence type="ECO:0000269" key="3">
    <source>
    </source>
</evidence>
<evidence type="ECO:0000305" key="4"/>
<dbReference type="EMBL" id="L31649">
    <property type="protein sequence ID" value="AAA34487.1"/>
    <property type="molecule type" value="Genomic_DNA"/>
</dbReference>
<dbReference type="EMBL" id="U22383">
    <property type="protein sequence ID" value="AAB64722.1"/>
    <property type="molecule type" value="Genomic_DNA"/>
</dbReference>
<dbReference type="EMBL" id="BK006945">
    <property type="protein sequence ID" value="DAA09758.1"/>
    <property type="molecule type" value="Genomic_DNA"/>
</dbReference>
<dbReference type="PIR" id="S48522">
    <property type="entry name" value="S48522"/>
</dbReference>
<dbReference type="RefSeq" id="NP_013564.1">
    <property type="nucleotide sequence ID" value="NM_001182347.1"/>
</dbReference>
<dbReference type="SMR" id="P41733"/>
<dbReference type="BioGRID" id="31717">
    <property type="interactions" value="590"/>
</dbReference>
<dbReference type="ComplexPortal" id="CPX-1275">
    <property type="entry name" value="GPI-anchor transamidase complex"/>
</dbReference>
<dbReference type="DIP" id="DIP-4553N"/>
<dbReference type="FunCoup" id="P41733">
    <property type="interactions" value="787"/>
</dbReference>
<dbReference type="IntAct" id="P41733">
    <property type="interactions" value="2"/>
</dbReference>
<dbReference type="STRING" id="4932.YLR459W"/>
<dbReference type="PaxDb" id="4932-YLR459W"/>
<dbReference type="PeptideAtlas" id="P41733"/>
<dbReference type="EnsemblFungi" id="YLR459W_mRNA">
    <property type="protein sequence ID" value="YLR459W"/>
    <property type="gene ID" value="YLR459W"/>
</dbReference>
<dbReference type="GeneID" id="851181"/>
<dbReference type="KEGG" id="sce:YLR459W"/>
<dbReference type="AGR" id="SGD:S000004451"/>
<dbReference type="SGD" id="S000004451">
    <property type="gene designation" value="GAB1"/>
</dbReference>
<dbReference type="VEuPathDB" id="FungiDB:YLR459W"/>
<dbReference type="eggNOG" id="KOG2552">
    <property type="taxonomic scope" value="Eukaryota"/>
</dbReference>
<dbReference type="GeneTree" id="ENSGT00390000014941"/>
<dbReference type="HOGENOM" id="CLU_030193_0_1_1"/>
<dbReference type="InParanoid" id="P41733"/>
<dbReference type="OMA" id="ALWHLWI"/>
<dbReference type="OrthoDB" id="549017at2759"/>
<dbReference type="BioCyc" id="YEAST:G3O-32511-MONOMER"/>
<dbReference type="UniPathway" id="UPA00196"/>
<dbReference type="BioGRID-ORCS" id="851181">
    <property type="hits" value="0 hits in 10 CRISPR screens"/>
</dbReference>
<dbReference type="PRO" id="PR:P41733"/>
<dbReference type="Proteomes" id="UP000002311">
    <property type="component" value="Chromosome XII"/>
</dbReference>
<dbReference type="RNAct" id="P41733">
    <property type="molecule type" value="protein"/>
</dbReference>
<dbReference type="GO" id="GO:0005783">
    <property type="term" value="C:endoplasmic reticulum"/>
    <property type="evidence" value="ECO:0007005"/>
    <property type="project" value="SGD"/>
</dbReference>
<dbReference type="GO" id="GO:0005789">
    <property type="term" value="C:endoplasmic reticulum membrane"/>
    <property type="evidence" value="ECO:0000303"/>
    <property type="project" value="ComplexPortal"/>
</dbReference>
<dbReference type="GO" id="GO:0042765">
    <property type="term" value="C:GPI-anchor transamidase complex"/>
    <property type="evidence" value="ECO:0000315"/>
    <property type="project" value="SGD"/>
</dbReference>
<dbReference type="GO" id="GO:0016255">
    <property type="term" value="P:attachment of GPI anchor to protein"/>
    <property type="evidence" value="ECO:0000315"/>
    <property type="project" value="SGD"/>
</dbReference>
<dbReference type="GO" id="GO:0051301">
    <property type="term" value="P:cell division"/>
    <property type="evidence" value="ECO:0007669"/>
    <property type="project" value="UniProtKB-KW"/>
</dbReference>
<dbReference type="GO" id="GO:0031505">
    <property type="term" value="P:fungal-type cell wall organization"/>
    <property type="evidence" value="ECO:0000303"/>
    <property type="project" value="ComplexPortal"/>
</dbReference>
<dbReference type="GO" id="GO:0006506">
    <property type="term" value="P:GPI anchor biosynthetic process"/>
    <property type="evidence" value="ECO:0007669"/>
    <property type="project" value="UniProtKB-UniPathway"/>
</dbReference>
<dbReference type="InterPro" id="IPR009600">
    <property type="entry name" value="PIG-U"/>
</dbReference>
<dbReference type="PANTHER" id="PTHR13121">
    <property type="entry name" value="GPI TRANSAMIDASE COMPONENT PIG-U"/>
    <property type="match status" value="1"/>
</dbReference>
<dbReference type="PANTHER" id="PTHR13121:SF0">
    <property type="entry name" value="PHOSPHATIDYLINOSITOL GLYCAN ANCHOR BIOSYNTHESIS CLASS U PROTEIN"/>
    <property type="match status" value="1"/>
</dbReference>
<dbReference type="Pfam" id="PF06728">
    <property type="entry name" value="PIG-U"/>
    <property type="match status" value="1"/>
</dbReference>
<name>CDC91_YEAST</name>